<dbReference type="EC" id="4.1.1.25" evidence="7"/>
<dbReference type="EMBL" id="BX284602">
    <property type="protein sequence ID" value="CAA88862.1"/>
    <property type="molecule type" value="Genomic_DNA"/>
</dbReference>
<dbReference type="EMBL" id="BX284602">
    <property type="protein sequence ID" value="CAC42319.1"/>
    <property type="molecule type" value="Genomic_DNA"/>
</dbReference>
<dbReference type="PIR" id="T23168">
    <property type="entry name" value="T23168"/>
</dbReference>
<dbReference type="PIR" id="T23175">
    <property type="entry name" value="T23175"/>
</dbReference>
<dbReference type="RefSeq" id="NP_495743.1">
    <molecule id="Q95ZS2-1"/>
    <property type="nucleotide sequence ID" value="NM_063342.6"/>
</dbReference>
<dbReference type="RefSeq" id="NP_495744.1">
    <molecule id="Q95ZS2-2"/>
    <property type="nucleotide sequence ID" value="NM_063343.4"/>
</dbReference>
<dbReference type="SMR" id="Q95ZS2"/>
<dbReference type="FunCoup" id="Q95ZS2">
    <property type="interactions" value="37"/>
</dbReference>
<dbReference type="STRING" id="6239.K01C8.3b.1"/>
<dbReference type="PaxDb" id="6239-K01C8.3b"/>
<dbReference type="PeptideAtlas" id="Q95ZS2"/>
<dbReference type="EnsemblMetazoa" id="K01C8.3a.1">
    <molecule id="Q95ZS2-2"/>
    <property type="protein sequence ID" value="K01C8.3a.1"/>
    <property type="gene ID" value="WBGene00006562"/>
</dbReference>
<dbReference type="EnsemblMetazoa" id="K01C8.3b.1">
    <molecule id="Q95ZS2-1"/>
    <property type="protein sequence ID" value="K01C8.3b.1"/>
    <property type="gene ID" value="WBGene00006562"/>
</dbReference>
<dbReference type="GeneID" id="174327"/>
<dbReference type="KEGG" id="cel:CELE_K01C8.3"/>
<dbReference type="UCSC" id="K01C8.3a">
    <property type="organism name" value="c. elegans"/>
</dbReference>
<dbReference type="AGR" id="WB:WBGene00006562"/>
<dbReference type="CTD" id="174327"/>
<dbReference type="WormBase" id="K01C8.3a">
    <molecule id="Q95ZS2-2"/>
    <property type="protein sequence ID" value="CE21011"/>
    <property type="gene ID" value="WBGene00006562"/>
    <property type="gene designation" value="tdc-1"/>
</dbReference>
<dbReference type="WormBase" id="K01C8.3b">
    <molecule id="Q95ZS2-1"/>
    <property type="protein sequence ID" value="CE28344"/>
    <property type="gene ID" value="WBGene00006562"/>
    <property type="gene designation" value="tdc-1"/>
</dbReference>
<dbReference type="eggNOG" id="KOG0628">
    <property type="taxonomic scope" value="Eukaryota"/>
</dbReference>
<dbReference type="GeneTree" id="ENSGT00940000174368"/>
<dbReference type="InParanoid" id="Q95ZS2"/>
<dbReference type="OMA" id="ETIVCDW"/>
<dbReference type="OrthoDB" id="639767at2759"/>
<dbReference type="PhylomeDB" id="Q95ZS2"/>
<dbReference type="PRO" id="PR:Q95ZS2"/>
<dbReference type="Proteomes" id="UP000001940">
    <property type="component" value="Chromosome II"/>
</dbReference>
<dbReference type="Bgee" id="WBGene00006562">
    <property type="expression patterns" value="Expressed in adult organism and 4 other cell types or tissues"/>
</dbReference>
<dbReference type="GO" id="GO:0030424">
    <property type="term" value="C:axon"/>
    <property type="evidence" value="ECO:0000314"/>
    <property type="project" value="WormBase"/>
</dbReference>
<dbReference type="GO" id="GO:0005737">
    <property type="term" value="C:cytoplasm"/>
    <property type="evidence" value="ECO:0000318"/>
    <property type="project" value="GO_Central"/>
</dbReference>
<dbReference type="GO" id="GO:0043025">
    <property type="term" value="C:neuronal cell body"/>
    <property type="evidence" value="ECO:0000314"/>
    <property type="project" value="WormBase"/>
</dbReference>
<dbReference type="GO" id="GO:0043204">
    <property type="term" value="C:perikaryon"/>
    <property type="evidence" value="ECO:0007669"/>
    <property type="project" value="UniProtKB-SubCell"/>
</dbReference>
<dbReference type="GO" id="GO:0016831">
    <property type="term" value="F:carboxy-lyase activity"/>
    <property type="evidence" value="ECO:0000318"/>
    <property type="project" value="GO_Central"/>
</dbReference>
<dbReference type="GO" id="GO:0030170">
    <property type="term" value="F:pyridoxal phosphate binding"/>
    <property type="evidence" value="ECO:0007669"/>
    <property type="project" value="InterPro"/>
</dbReference>
<dbReference type="GO" id="GO:0004837">
    <property type="term" value="F:tyrosine decarboxylase activity"/>
    <property type="evidence" value="ECO:0000315"/>
    <property type="project" value="WormBase"/>
</dbReference>
<dbReference type="GO" id="GO:0006520">
    <property type="term" value="P:amino acid metabolic process"/>
    <property type="evidence" value="ECO:0007669"/>
    <property type="project" value="InterPro"/>
</dbReference>
<dbReference type="GO" id="GO:0019752">
    <property type="term" value="P:carboxylic acid metabolic process"/>
    <property type="evidence" value="ECO:0007669"/>
    <property type="project" value="InterPro"/>
</dbReference>
<dbReference type="GO" id="GO:0006589">
    <property type="term" value="P:octopamine biosynthetic process"/>
    <property type="evidence" value="ECO:0000315"/>
    <property type="project" value="WormBase"/>
</dbReference>
<dbReference type="CDD" id="cd06450">
    <property type="entry name" value="DOPA_deC_like"/>
    <property type="match status" value="1"/>
</dbReference>
<dbReference type="FunFam" id="1.20.1340.10:FF:000001">
    <property type="entry name" value="Histidine decarboxylase"/>
    <property type="match status" value="1"/>
</dbReference>
<dbReference type="FunFam" id="3.40.640.10:FF:000025">
    <property type="entry name" value="Histidine decarboxylase"/>
    <property type="match status" value="1"/>
</dbReference>
<dbReference type="FunFam" id="3.90.1150.10:FF:000018">
    <property type="entry name" value="Histidine decarboxylase"/>
    <property type="match status" value="1"/>
</dbReference>
<dbReference type="Gene3D" id="3.90.1150.10">
    <property type="entry name" value="Aspartate Aminotransferase, domain 1"/>
    <property type="match status" value="1"/>
</dbReference>
<dbReference type="Gene3D" id="1.20.1340.10">
    <property type="entry name" value="dopa decarboxylase, N-terminal domain"/>
    <property type="match status" value="1"/>
</dbReference>
<dbReference type="Gene3D" id="3.40.640.10">
    <property type="entry name" value="Type I PLP-dependent aspartate aminotransferase-like (Major domain)"/>
    <property type="match status" value="1"/>
</dbReference>
<dbReference type="InterPro" id="IPR010977">
    <property type="entry name" value="Aromatic_deC"/>
</dbReference>
<dbReference type="InterPro" id="IPR002129">
    <property type="entry name" value="PyrdxlP-dep_de-COase"/>
</dbReference>
<dbReference type="InterPro" id="IPR015424">
    <property type="entry name" value="PyrdxlP-dep_Trfase"/>
</dbReference>
<dbReference type="InterPro" id="IPR015421">
    <property type="entry name" value="PyrdxlP-dep_Trfase_major"/>
</dbReference>
<dbReference type="InterPro" id="IPR015422">
    <property type="entry name" value="PyrdxlP-dep_Trfase_small"/>
</dbReference>
<dbReference type="InterPro" id="IPR021115">
    <property type="entry name" value="Pyridoxal-P_BS"/>
</dbReference>
<dbReference type="PANTHER" id="PTHR11999">
    <property type="entry name" value="GROUP II PYRIDOXAL-5-PHOSPHATE DECARBOXYLASE"/>
    <property type="match status" value="1"/>
</dbReference>
<dbReference type="PANTHER" id="PTHR11999:SF70">
    <property type="entry name" value="MIP05841P"/>
    <property type="match status" value="1"/>
</dbReference>
<dbReference type="Pfam" id="PF00282">
    <property type="entry name" value="Pyridoxal_deC"/>
    <property type="match status" value="1"/>
</dbReference>
<dbReference type="PRINTS" id="PR00800">
    <property type="entry name" value="YHDCRBOXLASE"/>
</dbReference>
<dbReference type="SUPFAM" id="SSF53383">
    <property type="entry name" value="PLP-dependent transferases"/>
    <property type="match status" value="1"/>
</dbReference>
<dbReference type="PROSITE" id="PS00392">
    <property type="entry name" value="DDC_GAD_HDC_YDC"/>
    <property type="match status" value="1"/>
</dbReference>
<accession>Q95ZS2</accession>
<accession>Q21087</accession>
<organism evidence="9">
    <name type="scientific">Caenorhabditis elegans</name>
    <dbReference type="NCBI Taxonomy" id="6239"/>
    <lineage>
        <taxon>Eukaryota</taxon>
        <taxon>Metazoa</taxon>
        <taxon>Ecdysozoa</taxon>
        <taxon>Nematoda</taxon>
        <taxon>Chromadorea</taxon>
        <taxon>Rhabditida</taxon>
        <taxon>Rhabditina</taxon>
        <taxon>Rhabditomorpha</taxon>
        <taxon>Rhabditoidea</taxon>
        <taxon>Rhabditidae</taxon>
        <taxon>Peloderinae</taxon>
        <taxon>Caenorhabditis</taxon>
    </lineage>
</organism>
<name>TDC1_CAEEL</name>
<proteinExistence type="evidence at transcript level"/>
<reference evidence="9" key="1">
    <citation type="journal article" date="1998" name="Science">
        <title>Genome sequence of the nematode C. elegans: a platform for investigating biology.</title>
        <authorList>
            <consortium name="The C. elegans sequencing consortium"/>
        </authorList>
    </citation>
    <scope>NUCLEOTIDE SEQUENCE [LARGE SCALE GENOMIC DNA]</scope>
    <source>
        <strain evidence="9">Bristol N2</strain>
    </source>
</reference>
<reference evidence="7" key="2">
    <citation type="journal article" date="2005" name="Neuron">
        <title>Tyramine functions independently of octopamine in the Caenorhabditis elegans nervous system.</title>
        <authorList>
            <person name="Alkema M.J."/>
            <person name="Hunter-Ensor M."/>
            <person name="Ringstad N."/>
            <person name="Horvitz H.R."/>
        </authorList>
    </citation>
    <scope>FUNCTION</scope>
    <scope>SUBCELLULAR LOCATION</scope>
    <scope>TISSUE SPECIFICITY</scope>
    <scope>DEVELOPMENTAL STAGE</scope>
    <scope>DISRUPTION PHENOTYPE</scope>
</reference>
<reference evidence="7" key="3">
    <citation type="journal article" date="2015" name="Cell">
        <title>Neuronal CRTC-1 governs systemic mitochondrial metabolism and lifespan via a catecholamine signal.</title>
        <authorList>
            <person name="Burkewitz K."/>
            <person name="Morantte I."/>
            <person name="Weir H.J."/>
            <person name="Yeo R."/>
            <person name="Zhang Y."/>
            <person name="Huynh F.K."/>
            <person name="Ilkayeva O.R."/>
            <person name="Hirschey M.D."/>
            <person name="Grant A.R."/>
            <person name="Mair W.B."/>
        </authorList>
    </citation>
    <scope>FUNCTION</scope>
</reference>
<gene>
    <name evidence="11" type="primary">tdc-1</name>
    <name evidence="11" type="ORF">K01C8.3</name>
</gene>
<feature type="chain" id="PRO_0000433367" description="Tyrosine decarboxylase" evidence="7">
    <location>
        <begin position="1"/>
        <end position="705"/>
    </location>
</feature>
<feature type="region of interest" description="Disordered" evidence="4">
    <location>
        <begin position="22"/>
        <end position="81"/>
    </location>
</feature>
<feature type="region of interest" description="Disordered" evidence="4">
    <location>
        <begin position="667"/>
        <end position="687"/>
    </location>
</feature>
<feature type="coiled-coil region" evidence="2">
    <location>
        <begin position="554"/>
        <end position="620"/>
    </location>
</feature>
<feature type="compositionally biased region" description="Polar residues" evidence="4">
    <location>
        <begin position="22"/>
        <end position="32"/>
    </location>
</feature>
<feature type="compositionally biased region" description="Low complexity" evidence="4">
    <location>
        <begin position="33"/>
        <end position="55"/>
    </location>
</feature>
<feature type="compositionally biased region" description="Polar residues" evidence="4">
    <location>
        <begin position="667"/>
        <end position="678"/>
    </location>
</feature>
<feature type="modified residue" description="N6-(pyridoxal phosphate)lysine" evidence="1">
    <location>
        <position position="380"/>
    </location>
</feature>
<feature type="splice variant" id="VSP_057753" description="In isoform a." evidence="7">
    <original>SFLVRMVSDPKCYNPKIVRHLNMANHRK</original>
    <variation>YTPQPLDLALAPDSDPELSPCSPQILVS</variation>
    <location>
        <begin position="623"/>
        <end position="650"/>
    </location>
</feature>
<feature type="splice variant" id="VSP_057754" description="In isoform a." evidence="7">
    <location>
        <begin position="651"/>
        <end position="705"/>
    </location>
</feature>
<protein>
    <recommendedName>
        <fullName evidence="11">Tyrosine decarboxylase</fullName>
        <ecNumber evidence="7">4.1.1.25</ecNumber>
    </recommendedName>
</protein>
<sequence length="705" mass="79711">MVYGLGEALKNLNSYCQERTTRIRNSLSPSRPSMSEATATGSSSSSRASTTIPSTPNMDVTPTVEDPRQNDNNASGMTRDEFRQYGKETVDYIVDYLENIQKRRVVPAIEPGYLKDLIPSEAPNTPESFESVMEDFEKLIMPGITHWQHPRFHAYFPAGNSFPSIIADMLSDAIGCVGFSWAACPAMTELELIMLDWFGKMIGLPAEFLPLTENGKGGGVIQSSASECNFVTLLAARFEVMKELRQRFPFVEEGLLLSKLIAYCSKEAHSSVEKACMIGMVKLRILETDSKFRLRGDTLRNAIQEDRNLGLIPFFVSTTLGTTSCCSFDVLSEIGPICKENELWLHVDAAYSGSAFICPEFRPLMNGIEYAMSFNTNPNKWLLINFDCSTMWVRDRFKLTQALVVDPLYLQHSWMDKSIDYRHWGIPLSRRFRSLKLWFVIRMYGIDGLQKYIREHVRLAKKMETLLRADAKFEIVNEVIMGLVCFRMKGDDELNQTLLTRLNASGRIHMVPASLGDRFVIRFCVCAENATDKDIEVAYEIIAQATQHVLHDSVKAVIAEEDEEAVALEEMVADLNITETPEKCLTRQNSANAAESGQKLERQLSKEEILAQKQHESLAKKRSFLVRMVSDPKCYNPKIVRHLNMANHRKMSQDLYRDRTLMQTISHSQRPNRLSQSPGSAGSAFFDDDDDRIVADVQTGLQTPI</sequence>
<comment type="function">
    <text evidence="5 6">Required for the decarboxylation of tyrosine to tyramine, a precursor of octopamine but probably also itself a neurotransmitter (PubMed:15848803). Involved in the regulation of egg laying, which is inhibited by tyramine (PubMed:15848803). Also involved in controlling locomotion and head movements (PubMed:15848803). Due to its involvement in octopamine biosynthesis, also required for crtc-1-dependent regulation of AMPK-mediated longevity which requires octopamine signaling (PubMed:25723162).</text>
</comment>
<comment type="catalytic activity">
    <reaction evidence="8">
        <text>L-tyrosine + H(+) = tyramine + CO2</text>
        <dbReference type="Rhea" id="RHEA:14345"/>
        <dbReference type="ChEBI" id="CHEBI:15378"/>
        <dbReference type="ChEBI" id="CHEBI:16526"/>
        <dbReference type="ChEBI" id="CHEBI:58315"/>
        <dbReference type="ChEBI" id="CHEBI:327995"/>
        <dbReference type="EC" id="4.1.1.25"/>
    </reaction>
</comment>
<comment type="cofactor">
    <cofactor evidence="3">
        <name>pyridoxal 5'-phosphate</name>
        <dbReference type="ChEBI" id="CHEBI:597326"/>
    </cofactor>
</comment>
<comment type="subcellular location">
    <subcellularLocation>
        <location evidence="5">Cytoplasm</location>
    </subcellularLocation>
    <subcellularLocation>
        <location evidence="5">Cell projection</location>
        <location evidence="5">Axon</location>
    </subcellularLocation>
    <subcellularLocation>
        <location evidence="5">Perikaryon</location>
    </subcellularLocation>
</comment>
<comment type="alternative products">
    <event type="alternative splicing"/>
    <isoform>
        <id>Q95ZS2-1</id>
        <name evidence="11">b</name>
        <sequence type="displayed"/>
    </isoform>
    <isoform>
        <id>Q95ZS2-2</id>
        <name evidence="10">a</name>
        <sequence type="described" ref="VSP_057753 VSP_057754"/>
    </isoform>
</comment>
<comment type="tissue specificity">
    <text evidence="5">Expressed in the gonadal sheath projections in between the oocytes, in head RIM motor neurons and RIC interneurons.</text>
</comment>
<comment type="developmental stage">
    <text evidence="5">Expressed in UV1 uterine cells in late L4 larval stage.</text>
</comment>
<comment type="disruption phenotype">
    <text evidence="5">Mutants almost completely lack tyramine, have fewer eggs in the uterus and are hyperactive in egg laying in the presence of food with most eggs being laid at the 1-8 cell stage. They also have a reduced backing response, show more spontaneous reversals and fail to suppress head oscillations upon anterior touch.</text>
</comment>
<comment type="similarity">
    <text evidence="3">Belongs to the group II decarboxylase family.</text>
</comment>
<evidence type="ECO:0000250" key="1"/>
<evidence type="ECO:0000255" key="2"/>
<evidence type="ECO:0000255" key="3">
    <source>
        <dbReference type="RuleBase" id="RU000382"/>
    </source>
</evidence>
<evidence type="ECO:0000256" key="4">
    <source>
        <dbReference type="SAM" id="MobiDB-lite"/>
    </source>
</evidence>
<evidence type="ECO:0000269" key="5">
    <source>
    </source>
</evidence>
<evidence type="ECO:0000269" key="6">
    <source>
    </source>
</evidence>
<evidence type="ECO:0000305" key="7"/>
<evidence type="ECO:0000305" key="8">
    <source>
    </source>
</evidence>
<evidence type="ECO:0000312" key="9">
    <source>
        <dbReference type="Proteomes" id="UP000001940"/>
    </source>
</evidence>
<evidence type="ECO:0000312" key="10">
    <source>
        <dbReference type="WormBase" id="K01C8.3a"/>
    </source>
</evidence>
<evidence type="ECO:0000312" key="11">
    <source>
        <dbReference type="WormBase" id="K01C8.3b"/>
    </source>
</evidence>
<keyword id="KW-0025">Alternative splicing</keyword>
<keyword id="KW-0966">Cell projection</keyword>
<keyword id="KW-0175">Coiled coil</keyword>
<keyword id="KW-0963">Cytoplasm</keyword>
<keyword id="KW-0210">Decarboxylase</keyword>
<keyword id="KW-0456">Lyase</keyword>
<keyword id="KW-0663">Pyridoxal phosphate</keyword>
<keyword id="KW-1185">Reference proteome</keyword>